<reference key="1">
    <citation type="journal article" date="1985" name="EMBO J.">
        <title>Genes 55, alpha gt, 47 and 46 of bacteriophage T4: the genomic organization as deduced by sequence analysis.</title>
        <authorList>
            <person name="Gram H."/>
            <person name="Rueger W."/>
        </authorList>
    </citation>
    <scope>NUCLEOTIDE SEQUENCE [GENOMIC DNA]</scope>
</reference>
<reference key="2">
    <citation type="journal article" date="2003" name="Microbiol. Mol. Biol. Rev.">
        <title>Bacteriophage T4 genome.</title>
        <authorList>
            <person name="Miller E.S."/>
            <person name="Kutter E."/>
            <person name="Mosig G."/>
            <person name="Arisaka F."/>
            <person name="Kunisawa T."/>
            <person name="Ruger W."/>
        </authorList>
    </citation>
    <scope>NUCLEOTIDE SEQUENCE [LARGE SCALE GENOMIC DNA]</scope>
</reference>
<sequence>MKFSTFDINDEFIANIDYTEEDSRYVGIIYITSKTAQGVVCMAEFDEYFLDYDDMIEWSKRYIKRNLL</sequence>
<dbReference type="EMBL" id="X01804">
    <property type="protein sequence ID" value="CAA25944.1"/>
    <property type="molecule type" value="Genomic_DNA"/>
</dbReference>
<dbReference type="EMBL" id="AF158101">
    <property type="protein sequence ID" value="AAD42473.1"/>
    <property type="molecule type" value="Genomic_DNA"/>
</dbReference>
<dbReference type="PIR" id="T10161">
    <property type="entry name" value="T10161"/>
</dbReference>
<dbReference type="RefSeq" id="NP_049670.1">
    <property type="nucleotide sequence ID" value="NC_000866.4"/>
</dbReference>
<dbReference type="GeneID" id="1258639"/>
<dbReference type="KEGG" id="vg:1258639"/>
<dbReference type="OrthoDB" id="22018at10239"/>
<dbReference type="Proteomes" id="UP000009087">
    <property type="component" value="Segment"/>
</dbReference>
<dbReference type="InterPro" id="IPR020087">
    <property type="entry name" value="DUF5487"/>
</dbReference>
<dbReference type="Pfam" id="PF17589">
    <property type="entry name" value="DUF5487"/>
    <property type="match status" value="1"/>
</dbReference>
<name>Y03B_BPT4</name>
<proteinExistence type="predicted"/>
<accession>P32268</accession>
<organism>
    <name type="scientific">Enterobacteria phage T4</name>
    <name type="common">Bacteriophage T4</name>
    <dbReference type="NCBI Taxonomy" id="10665"/>
    <lineage>
        <taxon>Viruses</taxon>
        <taxon>Duplodnaviria</taxon>
        <taxon>Heunggongvirae</taxon>
        <taxon>Uroviricota</taxon>
        <taxon>Caudoviricetes</taxon>
        <taxon>Straboviridae</taxon>
        <taxon>Tevenvirinae</taxon>
        <taxon>Tequatrovirus</taxon>
    </lineage>
</organism>
<feature type="chain" id="PRO_0000165098" description="Uncharacterized 8.2 kDa protein in Gp46-Gp47 intergenic region">
    <location>
        <begin position="1"/>
        <end position="68"/>
    </location>
</feature>
<gene>
    <name type="primary">y03B</name>
    <name type="synonym">46.1</name>
</gene>
<organismHost>
    <name type="scientific">Escherichia coli</name>
    <dbReference type="NCBI Taxonomy" id="562"/>
</organismHost>
<keyword id="KW-1185">Reference proteome</keyword>
<protein>
    <recommendedName>
        <fullName>Uncharacterized 8.2 kDa protein in Gp46-Gp47 intergenic region</fullName>
    </recommendedName>
    <alternativeName>
        <fullName>ORF G</fullName>
    </alternativeName>
</protein>